<proteinExistence type="evidence at transcript level"/>
<name>GALT7_RAT</name>
<reference key="1">
    <citation type="journal article" date="1999" name="J. Biol. Chem.">
        <title>Characterization of a UDP-GalNAc:polypeptide N-acetylgalactosaminyltransferase that displays glycopeptide N-acetylgalactosaminyltransferase activity.</title>
        <authorList>
            <person name="Ten Hagen K.G."/>
            <person name="Tetaert D."/>
            <person name="Hagen F.K."/>
            <person name="Richet C."/>
            <person name="Beres T.B."/>
            <person name="Gagnon J."/>
            <person name="Balys M.M."/>
            <person name="VanWuyckhuyse B."/>
            <person name="Bedi G.S."/>
            <person name="Degand P."/>
            <person name="Tabak L.A."/>
        </authorList>
    </citation>
    <scope>NUCLEOTIDE SEQUENCE [MRNA]</scope>
    <scope>ENZYME ACTIVITY</scope>
    <scope>TISSUE SPECIFICITY</scope>
    <source>
        <strain>Sprague-Dawley</strain>
        <tissue>Sublingual gland</tissue>
    </source>
</reference>
<accession>Q9R0C5</accession>
<sequence>MRLKIGFILRSLLVVGSFLGLVVLWSSLSSRPDDPSPLSRMREDRDVNNPLPNRGGNGLAPGDDRFKPVVPWPHVEGVEVDLESIRRKNKAKNEQERHAGGDSQKDIMQRQYLTFKPQTFTYRDPVLRPGVLGNFEPKEPEPHGVVGGPGENAKPLVLGPEYKQAAQASIKEFGFNMAASDMISLDRSVNDLRQEECKYWHYDENLLTSSVVIVFHNEGWSTLMRTVHSVIKRTPRKYLAEIVLIDDFSNKEHLKEKLTEYIKLWNGLVKVFRNERREGLIQARSIGAQKAKLGQVLIYLDAHCEVAVNWYAPLVAPISKDRTICTVPIIDVINGNTYEIIPQGGGDEDGYARGAWDWSMLWKRVPLTPREKRLRKTKTEPYRSPAMAGGLFAIERDFFFELGLYDPGLQIWGGENFEISYKIWQCGGKLLFVPCSRVGHIYRLEGWQGNPPPLYVGSSPTLKNYVRVVEVWWDEYKDYFYASRPESKALPYGDISELKKFREDHNCKSFKWFMEEIAYDITAHYPLPPRNVEWGEIRGLETAYCIDSMGKTNGGFVELGPCHRMGGNQLFRINEANQLMQYDQCLTKGPDGSKVMITHCNLNEFKEWQYFKNLHRFTHIASGKCLDRSEVLHQVFISSCDNGKMTQKWEMNNIHSV</sequence>
<dbReference type="EC" id="2.4.1.41" evidence="2"/>
<dbReference type="EMBL" id="AF076167">
    <property type="protein sequence ID" value="AAC99426.1"/>
    <property type="molecule type" value="mRNA"/>
</dbReference>
<dbReference type="RefSeq" id="NP_075215.1">
    <property type="nucleotide sequence ID" value="NM_022926.2"/>
</dbReference>
<dbReference type="SMR" id="Q9R0C5"/>
<dbReference type="FunCoup" id="Q9R0C5">
    <property type="interactions" value="2375"/>
</dbReference>
<dbReference type="STRING" id="10116.ENSRNOP00000072171"/>
<dbReference type="CAZy" id="CBM13">
    <property type="family name" value="Carbohydrate-Binding Module Family 13"/>
</dbReference>
<dbReference type="CAZy" id="GT27">
    <property type="family name" value="Glycosyltransferase Family 27"/>
</dbReference>
<dbReference type="PhosphoSitePlus" id="Q9R0C5"/>
<dbReference type="PaxDb" id="10116-ENSRNOP00000016474"/>
<dbReference type="GeneID" id="29750"/>
<dbReference type="KEGG" id="rno:29750"/>
<dbReference type="UCSC" id="RGD:620362">
    <property type="organism name" value="rat"/>
</dbReference>
<dbReference type="AGR" id="RGD:620362"/>
<dbReference type="CTD" id="51809"/>
<dbReference type="RGD" id="620362">
    <property type="gene designation" value="Galnt7"/>
</dbReference>
<dbReference type="VEuPathDB" id="HostDB:ENSRNOG00000012037"/>
<dbReference type="eggNOG" id="KOG3737">
    <property type="taxonomic scope" value="Eukaryota"/>
</dbReference>
<dbReference type="InParanoid" id="Q9R0C5"/>
<dbReference type="OrthoDB" id="6072411at2759"/>
<dbReference type="PhylomeDB" id="Q9R0C5"/>
<dbReference type="TreeFam" id="TF352176"/>
<dbReference type="BRENDA" id="2.4.1.41">
    <property type="organism ID" value="5301"/>
</dbReference>
<dbReference type="Reactome" id="R-RNO-913709">
    <property type="pathway name" value="O-linked glycosylation of mucins"/>
</dbReference>
<dbReference type="UniPathway" id="UPA00378"/>
<dbReference type="PRO" id="PR:Q9R0C5"/>
<dbReference type="Proteomes" id="UP000002494">
    <property type="component" value="Chromosome 16"/>
</dbReference>
<dbReference type="Bgee" id="ENSRNOG00000012037">
    <property type="expression patterns" value="Expressed in stomach and 20 other cell types or tissues"/>
</dbReference>
<dbReference type="GO" id="GO:0005794">
    <property type="term" value="C:Golgi apparatus"/>
    <property type="evidence" value="ECO:0000318"/>
    <property type="project" value="GO_Central"/>
</dbReference>
<dbReference type="GO" id="GO:0000139">
    <property type="term" value="C:Golgi membrane"/>
    <property type="evidence" value="ECO:0007669"/>
    <property type="project" value="UniProtKB-SubCell"/>
</dbReference>
<dbReference type="GO" id="GO:0030246">
    <property type="term" value="F:carbohydrate binding"/>
    <property type="evidence" value="ECO:0007669"/>
    <property type="project" value="UniProtKB-KW"/>
</dbReference>
<dbReference type="GO" id="GO:0046872">
    <property type="term" value="F:metal ion binding"/>
    <property type="evidence" value="ECO:0007669"/>
    <property type="project" value="UniProtKB-KW"/>
</dbReference>
<dbReference type="GO" id="GO:0004653">
    <property type="term" value="F:polypeptide N-acetylgalactosaminyltransferase activity"/>
    <property type="evidence" value="ECO:0000266"/>
    <property type="project" value="RGD"/>
</dbReference>
<dbReference type="GO" id="GO:0006493">
    <property type="term" value="P:protein O-linked glycosylation"/>
    <property type="evidence" value="ECO:0000266"/>
    <property type="project" value="RGD"/>
</dbReference>
<dbReference type="CDD" id="cd23437">
    <property type="entry name" value="beta-trefoil_Ricin_GALNT7"/>
    <property type="match status" value="1"/>
</dbReference>
<dbReference type="CDD" id="cd02510">
    <property type="entry name" value="pp-GalNAc-T"/>
    <property type="match status" value="1"/>
</dbReference>
<dbReference type="FunFam" id="2.80.10.50:FF:000019">
    <property type="entry name" value="Polypeptide N-acetylgalactosaminyltransferase"/>
    <property type="match status" value="1"/>
</dbReference>
<dbReference type="FunFam" id="3.90.550.10:FF:000031">
    <property type="entry name" value="Polypeptide N-acetylgalactosaminyltransferase"/>
    <property type="match status" value="1"/>
</dbReference>
<dbReference type="Gene3D" id="2.80.10.50">
    <property type="match status" value="1"/>
</dbReference>
<dbReference type="Gene3D" id="3.90.550.10">
    <property type="entry name" value="Spore Coat Polysaccharide Biosynthesis Protein SpsA, Chain A"/>
    <property type="match status" value="1"/>
</dbReference>
<dbReference type="InterPro" id="IPR045885">
    <property type="entry name" value="GalNAc-T"/>
</dbReference>
<dbReference type="InterPro" id="IPR001173">
    <property type="entry name" value="Glyco_trans_2-like"/>
</dbReference>
<dbReference type="InterPro" id="IPR029044">
    <property type="entry name" value="Nucleotide-diphossugar_trans"/>
</dbReference>
<dbReference type="InterPro" id="IPR035992">
    <property type="entry name" value="Ricin_B-like_lectins"/>
</dbReference>
<dbReference type="InterPro" id="IPR000772">
    <property type="entry name" value="Ricin_B_lectin"/>
</dbReference>
<dbReference type="PANTHER" id="PTHR11675">
    <property type="entry name" value="N-ACETYLGALACTOSAMINYLTRANSFERASE"/>
    <property type="match status" value="1"/>
</dbReference>
<dbReference type="PANTHER" id="PTHR11675:SF68">
    <property type="entry name" value="N-ACETYLGALACTOSAMINYLTRANSFERASE 7"/>
    <property type="match status" value="1"/>
</dbReference>
<dbReference type="Pfam" id="PF00535">
    <property type="entry name" value="Glycos_transf_2"/>
    <property type="match status" value="1"/>
</dbReference>
<dbReference type="Pfam" id="PF00652">
    <property type="entry name" value="Ricin_B_lectin"/>
    <property type="match status" value="1"/>
</dbReference>
<dbReference type="SMART" id="SM00458">
    <property type="entry name" value="RICIN"/>
    <property type="match status" value="1"/>
</dbReference>
<dbReference type="SUPFAM" id="SSF53448">
    <property type="entry name" value="Nucleotide-diphospho-sugar transferases"/>
    <property type="match status" value="1"/>
</dbReference>
<dbReference type="SUPFAM" id="SSF50370">
    <property type="entry name" value="Ricin B-like lectins"/>
    <property type="match status" value="1"/>
</dbReference>
<dbReference type="PROSITE" id="PS50231">
    <property type="entry name" value="RICIN_B_LECTIN"/>
    <property type="match status" value="1"/>
</dbReference>
<keyword id="KW-1015">Disulfide bond</keyword>
<keyword id="KW-0328">Glycosyltransferase</keyword>
<keyword id="KW-0333">Golgi apparatus</keyword>
<keyword id="KW-0430">Lectin</keyword>
<keyword id="KW-0464">Manganese</keyword>
<keyword id="KW-0472">Membrane</keyword>
<keyword id="KW-0479">Metal-binding</keyword>
<keyword id="KW-1185">Reference proteome</keyword>
<keyword id="KW-0735">Signal-anchor</keyword>
<keyword id="KW-0808">Transferase</keyword>
<keyword id="KW-0812">Transmembrane</keyword>
<keyword id="KW-1133">Transmembrane helix</keyword>
<comment type="function">
    <text evidence="2">Glycopeptide transferase involved in O-linked oligosaccharide biosynthesis, which catalyzes the transfer of an N-acetyl-D-galactosamine residue to an already glycosylated peptide. In contrast to other proteins of the family, it does not act as a peptide transferase that transfers GalNAc onto serine or threonine residue on the protein receptor, but instead requires the prior addition of a GalNAc on a peptide before adding additional GalNAc moieties. Some peptide transferase activity is however not excluded, considering that its appropriate peptide substrate may remain unidentified.</text>
</comment>
<comment type="catalytic activity">
    <reaction evidence="2">
        <text>L-seryl-[protein] + UDP-N-acetyl-alpha-D-galactosamine = a 3-O-[N-acetyl-alpha-D-galactosaminyl]-L-seryl-[protein] + UDP + H(+)</text>
        <dbReference type="Rhea" id="RHEA:23956"/>
        <dbReference type="Rhea" id="RHEA-COMP:9863"/>
        <dbReference type="Rhea" id="RHEA-COMP:12788"/>
        <dbReference type="ChEBI" id="CHEBI:15378"/>
        <dbReference type="ChEBI" id="CHEBI:29999"/>
        <dbReference type="ChEBI" id="CHEBI:53604"/>
        <dbReference type="ChEBI" id="CHEBI:58223"/>
        <dbReference type="ChEBI" id="CHEBI:67138"/>
        <dbReference type="EC" id="2.4.1.41"/>
    </reaction>
</comment>
<comment type="catalytic activity">
    <reaction evidence="2">
        <text>L-threonyl-[protein] + UDP-N-acetyl-alpha-D-galactosamine = a 3-O-[N-acetyl-alpha-D-galactosaminyl]-L-threonyl-[protein] + UDP + H(+)</text>
        <dbReference type="Rhea" id="RHEA:52424"/>
        <dbReference type="Rhea" id="RHEA-COMP:11060"/>
        <dbReference type="Rhea" id="RHEA-COMP:11689"/>
        <dbReference type="ChEBI" id="CHEBI:15378"/>
        <dbReference type="ChEBI" id="CHEBI:30013"/>
        <dbReference type="ChEBI" id="CHEBI:58223"/>
        <dbReference type="ChEBI" id="CHEBI:67138"/>
        <dbReference type="ChEBI" id="CHEBI:87075"/>
        <dbReference type="EC" id="2.4.1.41"/>
    </reaction>
</comment>
<comment type="cofactor">
    <cofactor evidence="1">
        <name>Mn(2+)</name>
        <dbReference type="ChEBI" id="CHEBI:29035"/>
    </cofactor>
</comment>
<comment type="pathway">
    <text evidence="2">Protein modification; protein glycosylation.</text>
</comment>
<comment type="subcellular location">
    <subcellularLocation>
        <location evidence="1">Golgi apparatus membrane</location>
        <topology evidence="1">Single-pass type II membrane protein</topology>
    </subcellularLocation>
</comment>
<comment type="tissue specificity">
    <text evidence="6">Highly expressed in sublingual gland. Expressed at lower level in stomach, small intestiine and colon.</text>
</comment>
<comment type="domain">
    <text evidence="1">There are two conserved domains in the glycosyltransferase region: the N-terminal domain (domain A, also called GT1 motif), which is probably involved in manganese coordination and substrate binding and the C-terminal domain (domain B, also called Gal/GalNAc-T motif), which is probably involved in catalytic reaction and UDP-Gal binding.</text>
</comment>
<comment type="domain">
    <text evidence="1">The ricin B-type lectin domain binds to GalNAc and contributes to the glycopeptide specificity.</text>
</comment>
<comment type="similarity">
    <text evidence="7">Belongs to the glycosyltransferase 2 family. GalNAc-T subfamily.</text>
</comment>
<comment type="caution">
    <text evidence="8">Was originally termed Galnt6/pp-GaNTase 6.</text>
</comment>
<protein>
    <recommendedName>
        <fullName>N-acetylgalactosaminyltransferase 7</fullName>
        <ecNumber evidence="2">2.4.1.41</ecNumber>
    </recommendedName>
    <alternativeName>
        <fullName>Polypeptide GalNAc transferase 7</fullName>
        <shortName>GalNAc-T7</shortName>
        <shortName>pp-GaNTase 7</shortName>
    </alternativeName>
    <alternativeName>
        <fullName>Protein-UDP acetylgalactosaminyltransferase 7</fullName>
    </alternativeName>
    <alternativeName>
        <fullName>UDP-GalNAc:polypeptide N-acetylgalactosaminyltransferase 7</fullName>
    </alternativeName>
</protein>
<gene>
    <name type="primary">Galnt7</name>
</gene>
<organism>
    <name type="scientific">Rattus norvegicus</name>
    <name type="common">Rat</name>
    <dbReference type="NCBI Taxonomy" id="10116"/>
    <lineage>
        <taxon>Eukaryota</taxon>
        <taxon>Metazoa</taxon>
        <taxon>Chordata</taxon>
        <taxon>Craniata</taxon>
        <taxon>Vertebrata</taxon>
        <taxon>Euteleostomi</taxon>
        <taxon>Mammalia</taxon>
        <taxon>Eutheria</taxon>
        <taxon>Euarchontoglires</taxon>
        <taxon>Glires</taxon>
        <taxon>Rodentia</taxon>
        <taxon>Myomorpha</taxon>
        <taxon>Muroidea</taxon>
        <taxon>Muridae</taxon>
        <taxon>Murinae</taxon>
        <taxon>Rattus</taxon>
    </lineage>
</organism>
<feature type="chain" id="PRO_0000059118" description="N-acetylgalactosaminyltransferase 7">
    <location>
        <begin position="1"/>
        <end position="657"/>
    </location>
</feature>
<feature type="topological domain" description="Cytoplasmic" evidence="3">
    <location>
        <begin position="1"/>
        <end position="6"/>
    </location>
</feature>
<feature type="transmembrane region" description="Helical; Signal-anchor for type II membrane protein" evidence="3">
    <location>
        <begin position="7"/>
        <end position="29"/>
    </location>
</feature>
<feature type="topological domain" description="Lumenal" evidence="3">
    <location>
        <begin position="30"/>
        <end position="657"/>
    </location>
</feature>
<feature type="domain" description="Ricin B-type lectin" evidence="4">
    <location>
        <begin position="532"/>
        <end position="652"/>
    </location>
</feature>
<feature type="region of interest" description="Disordered" evidence="5">
    <location>
        <begin position="30"/>
        <end position="66"/>
    </location>
</feature>
<feature type="region of interest" description="Catalytic subdomain A">
    <location>
        <begin position="206"/>
        <end position="317"/>
    </location>
</feature>
<feature type="region of interest" description="Catalytic subdomain B">
    <location>
        <begin position="381"/>
        <end position="443"/>
    </location>
</feature>
<feature type="binding site" evidence="1">
    <location>
        <position position="247"/>
    </location>
    <ligand>
        <name>substrate</name>
    </ligand>
</feature>
<feature type="binding site" evidence="1">
    <location>
        <position position="277"/>
    </location>
    <ligand>
        <name>substrate</name>
    </ligand>
</feature>
<feature type="binding site" evidence="1">
    <location>
        <position position="301"/>
    </location>
    <ligand>
        <name>Mn(2+)</name>
        <dbReference type="ChEBI" id="CHEBI:29035"/>
    </ligand>
</feature>
<feature type="binding site" evidence="1">
    <location>
        <position position="303"/>
    </location>
    <ligand>
        <name>Mn(2+)</name>
        <dbReference type="ChEBI" id="CHEBI:29035"/>
    </ligand>
</feature>
<feature type="binding site" evidence="1">
    <location>
        <position position="412"/>
    </location>
    <ligand>
        <name>substrate</name>
    </ligand>
</feature>
<feature type="binding site" evidence="1">
    <location>
        <position position="440"/>
    </location>
    <ligand>
        <name>Mn(2+)</name>
        <dbReference type="ChEBI" id="CHEBI:29035"/>
    </ligand>
</feature>
<feature type="binding site" evidence="1">
    <location>
        <position position="443"/>
    </location>
    <ligand>
        <name>substrate</name>
    </ligand>
</feature>
<feature type="disulfide bond" evidence="4">
    <location>
        <begin position="197"/>
        <end position="435"/>
    </location>
</feature>
<feature type="disulfide bond" evidence="4">
    <location>
        <begin position="426"/>
        <end position="507"/>
    </location>
</feature>
<feature type="disulfide bond" evidence="4">
    <location>
        <begin position="545"/>
        <end position="562"/>
    </location>
</feature>
<feature type="disulfide bond" evidence="4">
    <location>
        <begin position="585"/>
        <end position="600"/>
    </location>
</feature>
<feature type="disulfide bond" evidence="4">
    <location>
        <begin position="625"/>
        <end position="640"/>
    </location>
</feature>
<evidence type="ECO:0000250" key="1"/>
<evidence type="ECO:0000250" key="2">
    <source>
        <dbReference type="UniProtKB" id="Q86SF2"/>
    </source>
</evidence>
<evidence type="ECO:0000255" key="3"/>
<evidence type="ECO:0000255" key="4">
    <source>
        <dbReference type="PROSITE-ProRule" id="PRU00174"/>
    </source>
</evidence>
<evidence type="ECO:0000256" key="5">
    <source>
        <dbReference type="SAM" id="MobiDB-lite"/>
    </source>
</evidence>
<evidence type="ECO:0000269" key="6">
    <source>
    </source>
</evidence>
<evidence type="ECO:0000305" key="7"/>
<evidence type="ECO:0000305" key="8">
    <source>
    </source>
</evidence>